<sequence>MSAQKETLGFQTEVKQLLKLMIHSLYSNKEIFLRELISNASDAADKLRFEGLAKPELFENDPELKIRIAFDKDARTITIADNGIGMSRDEVVSHIGTIAKSGTKSFFEQLSGDEKKDAHLIGQFGVGFYSAFIVADKVTLTTRRAGEAEAVRWESHGEGEYTLESVEKAERGTEIVLHLKEGEDELLNDWKLKGIIRKYSDHISIPIEMKKGNSYGENGEVIVSDEMEAVNSASALWTRSKNDISEEQYQEFYKHVAHDFTAPLAWSHARVEGRQEYTELLYIPSRAPFDLYDRERKQGVKLYVRRVFIMEDTEKLMPHYLRFVRGVIDSNDLPLNVSREILQESKDIDAIRAGCVKKVLGLLEDLSANQPEKYAEFWKEFGQVLKEGVGEDFANKERIAKLLRFVSTASEDAEPTVSLADYIGRMKEGQDKIYYITADTLAAAKNSPHLEVFKKKGVEVLLLTDRVDEWVTGSLFEFDGKALQSVAKGALDLGALEDEADKEAQKQVEEASKPVVEKVQKALGDKVKEVRATARLVESPACLVAGEHDMSAHLERMLKAAGQKIEGSKPTLEINPEHVLVKRLAEESDEARAGDLAAVLYDQALLAEGGKLEDPASFVKRINKLMLELSV</sequence>
<dbReference type="EMBL" id="AE016825">
    <property type="protein sequence ID" value="AAQ58993.1"/>
    <property type="status" value="ALT_INIT"/>
    <property type="molecule type" value="Genomic_DNA"/>
</dbReference>
<dbReference type="RefSeq" id="WP_043595664.1">
    <property type="nucleotide sequence ID" value="NC_005085.1"/>
</dbReference>
<dbReference type="SMR" id="Q7NYF6"/>
<dbReference type="STRING" id="243365.CV_1318"/>
<dbReference type="GeneID" id="66366996"/>
<dbReference type="KEGG" id="cvi:CV_1318"/>
<dbReference type="eggNOG" id="COG0326">
    <property type="taxonomic scope" value="Bacteria"/>
</dbReference>
<dbReference type="HOGENOM" id="CLU_006684_3_0_4"/>
<dbReference type="OrthoDB" id="9802640at2"/>
<dbReference type="Proteomes" id="UP000001424">
    <property type="component" value="Chromosome"/>
</dbReference>
<dbReference type="GO" id="GO:0005737">
    <property type="term" value="C:cytoplasm"/>
    <property type="evidence" value="ECO:0007669"/>
    <property type="project" value="UniProtKB-SubCell"/>
</dbReference>
<dbReference type="GO" id="GO:0005524">
    <property type="term" value="F:ATP binding"/>
    <property type="evidence" value="ECO:0007669"/>
    <property type="project" value="UniProtKB-UniRule"/>
</dbReference>
<dbReference type="GO" id="GO:0016887">
    <property type="term" value="F:ATP hydrolysis activity"/>
    <property type="evidence" value="ECO:0007669"/>
    <property type="project" value="InterPro"/>
</dbReference>
<dbReference type="GO" id="GO:0140662">
    <property type="term" value="F:ATP-dependent protein folding chaperone"/>
    <property type="evidence" value="ECO:0007669"/>
    <property type="project" value="InterPro"/>
</dbReference>
<dbReference type="GO" id="GO:0051082">
    <property type="term" value="F:unfolded protein binding"/>
    <property type="evidence" value="ECO:0007669"/>
    <property type="project" value="UniProtKB-UniRule"/>
</dbReference>
<dbReference type="CDD" id="cd16927">
    <property type="entry name" value="HATPase_Hsp90-like"/>
    <property type="match status" value="1"/>
</dbReference>
<dbReference type="FunFam" id="3.30.230.80:FF:000002">
    <property type="entry name" value="Molecular chaperone HtpG"/>
    <property type="match status" value="1"/>
</dbReference>
<dbReference type="FunFam" id="3.30.565.10:FF:000009">
    <property type="entry name" value="Molecular chaperone HtpG"/>
    <property type="match status" value="1"/>
</dbReference>
<dbReference type="Gene3D" id="3.30.230.80">
    <property type="match status" value="1"/>
</dbReference>
<dbReference type="Gene3D" id="3.40.50.11260">
    <property type="match status" value="1"/>
</dbReference>
<dbReference type="Gene3D" id="1.20.120.790">
    <property type="entry name" value="Heat shock protein 90, C-terminal domain"/>
    <property type="match status" value="1"/>
</dbReference>
<dbReference type="Gene3D" id="3.30.565.10">
    <property type="entry name" value="Histidine kinase-like ATPase, C-terminal domain"/>
    <property type="match status" value="1"/>
</dbReference>
<dbReference type="HAMAP" id="MF_00505">
    <property type="entry name" value="HSP90"/>
    <property type="match status" value="1"/>
</dbReference>
<dbReference type="InterPro" id="IPR036890">
    <property type="entry name" value="HATPase_C_sf"/>
</dbReference>
<dbReference type="InterPro" id="IPR019805">
    <property type="entry name" value="Heat_shock_protein_90_CS"/>
</dbReference>
<dbReference type="InterPro" id="IPR037196">
    <property type="entry name" value="HSP90_C"/>
</dbReference>
<dbReference type="InterPro" id="IPR001404">
    <property type="entry name" value="Hsp90_fam"/>
</dbReference>
<dbReference type="InterPro" id="IPR020575">
    <property type="entry name" value="Hsp90_N"/>
</dbReference>
<dbReference type="InterPro" id="IPR020568">
    <property type="entry name" value="Ribosomal_Su5_D2-typ_SF"/>
</dbReference>
<dbReference type="NCBIfam" id="NF003555">
    <property type="entry name" value="PRK05218.1"/>
    <property type="match status" value="1"/>
</dbReference>
<dbReference type="PANTHER" id="PTHR11528">
    <property type="entry name" value="HEAT SHOCK PROTEIN 90 FAMILY MEMBER"/>
    <property type="match status" value="1"/>
</dbReference>
<dbReference type="Pfam" id="PF13589">
    <property type="entry name" value="HATPase_c_3"/>
    <property type="match status" value="1"/>
</dbReference>
<dbReference type="Pfam" id="PF00183">
    <property type="entry name" value="HSP90"/>
    <property type="match status" value="1"/>
</dbReference>
<dbReference type="PIRSF" id="PIRSF002583">
    <property type="entry name" value="Hsp90"/>
    <property type="match status" value="1"/>
</dbReference>
<dbReference type="PRINTS" id="PR00775">
    <property type="entry name" value="HEATSHOCK90"/>
</dbReference>
<dbReference type="SMART" id="SM00387">
    <property type="entry name" value="HATPase_c"/>
    <property type="match status" value="1"/>
</dbReference>
<dbReference type="SUPFAM" id="SSF55874">
    <property type="entry name" value="ATPase domain of HSP90 chaperone/DNA topoisomerase II/histidine kinase"/>
    <property type="match status" value="1"/>
</dbReference>
<dbReference type="SUPFAM" id="SSF110942">
    <property type="entry name" value="HSP90 C-terminal domain"/>
    <property type="match status" value="1"/>
</dbReference>
<dbReference type="SUPFAM" id="SSF54211">
    <property type="entry name" value="Ribosomal protein S5 domain 2-like"/>
    <property type="match status" value="1"/>
</dbReference>
<dbReference type="PROSITE" id="PS00298">
    <property type="entry name" value="HSP90"/>
    <property type="match status" value="1"/>
</dbReference>
<gene>
    <name evidence="1" type="primary">htpG</name>
    <name type="synonym">hptG</name>
    <name type="ordered locus">CV_1318</name>
</gene>
<evidence type="ECO:0000255" key="1">
    <source>
        <dbReference type="HAMAP-Rule" id="MF_00505"/>
    </source>
</evidence>
<evidence type="ECO:0000305" key="2"/>
<organism>
    <name type="scientific">Chromobacterium violaceum (strain ATCC 12472 / DSM 30191 / JCM 1249 / CCUG 213 / NBRC 12614 / NCIMB 9131 / NCTC 9757 / MK)</name>
    <dbReference type="NCBI Taxonomy" id="243365"/>
    <lineage>
        <taxon>Bacteria</taxon>
        <taxon>Pseudomonadati</taxon>
        <taxon>Pseudomonadota</taxon>
        <taxon>Betaproteobacteria</taxon>
        <taxon>Neisseriales</taxon>
        <taxon>Chromobacteriaceae</taxon>
        <taxon>Chromobacterium</taxon>
    </lineage>
</organism>
<keyword id="KW-0067">ATP-binding</keyword>
<keyword id="KW-0143">Chaperone</keyword>
<keyword id="KW-0963">Cytoplasm</keyword>
<keyword id="KW-0547">Nucleotide-binding</keyword>
<keyword id="KW-1185">Reference proteome</keyword>
<keyword id="KW-0346">Stress response</keyword>
<proteinExistence type="inferred from homology"/>
<feature type="chain" id="PRO_0000062980" description="Chaperone protein HtpG">
    <location>
        <begin position="1"/>
        <end position="631"/>
    </location>
</feature>
<feature type="region of interest" description="A; substrate-binding" evidence="1">
    <location>
        <begin position="1"/>
        <end position="339"/>
    </location>
</feature>
<feature type="region of interest" description="B" evidence="1">
    <location>
        <begin position="340"/>
        <end position="556"/>
    </location>
</feature>
<feature type="region of interest" description="C" evidence="1">
    <location>
        <begin position="557"/>
        <end position="631"/>
    </location>
</feature>
<reference key="1">
    <citation type="journal article" date="2003" name="Proc. Natl. Acad. Sci. U.S.A.">
        <title>The complete genome sequence of Chromobacterium violaceum reveals remarkable and exploitable bacterial adaptability.</title>
        <authorList>
            <person name="Vasconcelos A.T.R."/>
            <person name="de Almeida D.F."/>
            <person name="Hungria M."/>
            <person name="Guimaraes C.T."/>
            <person name="Antonio R.V."/>
            <person name="Almeida F.C."/>
            <person name="de Almeida L.G.P."/>
            <person name="de Almeida R."/>
            <person name="Alves-Gomes J.A."/>
            <person name="Andrade E.M."/>
            <person name="Araripe J."/>
            <person name="de Araujo M.F.F."/>
            <person name="Astolfi-Filho S."/>
            <person name="Azevedo V."/>
            <person name="Baptista A.J."/>
            <person name="Bataus L.A.M."/>
            <person name="Batista J.S."/>
            <person name="Belo A."/>
            <person name="van den Berg C."/>
            <person name="Bogo M."/>
            <person name="Bonatto S."/>
            <person name="Bordignon J."/>
            <person name="Brigido M.M."/>
            <person name="Brito C.A."/>
            <person name="Brocchi M."/>
            <person name="Burity H.A."/>
            <person name="Camargo A.A."/>
            <person name="Cardoso D.D.P."/>
            <person name="Carneiro N.P."/>
            <person name="Carraro D.M."/>
            <person name="Carvalho C.M.B."/>
            <person name="Cascardo J.C.M."/>
            <person name="Cavada B.S."/>
            <person name="Chueire L.M.O."/>
            <person name="Creczynski-Pasa T.B."/>
            <person name="Cunha-Junior N.C."/>
            <person name="Fagundes N."/>
            <person name="Falcao C.L."/>
            <person name="Fantinatti F."/>
            <person name="Farias I.P."/>
            <person name="Felipe M.S.S."/>
            <person name="Ferrari L.P."/>
            <person name="Ferro J.A."/>
            <person name="Ferro M.I.T."/>
            <person name="Franco G.R."/>
            <person name="Freitas N.S.A."/>
            <person name="Furlan L.R."/>
            <person name="Gazzinelli R.T."/>
            <person name="Gomes E.A."/>
            <person name="Goncalves P.R."/>
            <person name="Grangeiro T.B."/>
            <person name="Grattapaglia D."/>
            <person name="Grisard E.C."/>
            <person name="Hanna E.S."/>
            <person name="Jardim S.N."/>
            <person name="Laurino J."/>
            <person name="Leoi L.C.T."/>
            <person name="Lima L.F.A."/>
            <person name="Loureiro M.F."/>
            <person name="Lyra M.C.C.P."/>
            <person name="Madeira H.M.F."/>
            <person name="Manfio G.P."/>
            <person name="Maranhao A.Q."/>
            <person name="Martins W.S."/>
            <person name="di Mauro S.M.Z."/>
            <person name="de Medeiros S.R.B."/>
            <person name="Meissner R.V."/>
            <person name="Moreira M.A.M."/>
            <person name="Nascimento F.F."/>
            <person name="Nicolas M.F."/>
            <person name="Oliveira J.G."/>
            <person name="Oliveira S.C."/>
            <person name="Paixao R.F.C."/>
            <person name="Parente J.A."/>
            <person name="Pedrosa F.O."/>
            <person name="Pena S.D.J."/>
            <person name="Pereira J.O."/>
            <person name="Pereira M."/>
            <person name="Pinto L.S.R.C."/>
            <person name="Pinto L.S."/>
            <person name="Porto J.I.R."/>
            <person name="Potrich D.P."/>
            <person name="Ramalho-Neto C.E."/>
            <person name="Reis A.M.M."/>
            <person name="Rigo L.U."/>
            <person name="Rondinelli E."/>
            <person name="Santos E.B.P."/>
            <person name="Santos F.R."/>
            <person name="Schneider M.P.C."/>
            <person name="Seuanez H.N."/>
            <person name="Silva A.M.R."/>
            <person name="da Silva A.L.C."/>
            <person name="Silva D.W."/>
            <person name="Silva R."/>
            <person name="Simoes I.C."/>
            <person name="Simon D."/>
            <person name="Soares C.M.A."/>
            <person name="Soares R.B.A."/>
            <person name="Souza E.M."/>
            <person name="Souza K.R.L."/>
            <person name="Souza R.C."/>
            <person name="Steffens M.B.R."/>
            <person name="Steindel M."/>
            <person name="Teixeira S.R."/>
            <person name="Urmenyi T."/>
            <person name="Vettore A."/>
            <person name="Wassem R."/>
            <person name="Zaha A."/>
            <person name="Simpson A.J.G."/>
        </authorList>
    </citation>
    <scope>NUCLEOTIDE SEQUENCE [LARGE SCALE GENOMIC DNA]</scope>
    <source>
        <strain>ATCC 12472 / DSM 30191 / JCM 1249 / CCUG 213 / NBRC 12614 / NCIMB 9131 / NCTC 9757 / MK</strain>
    </source>
</reference>
<name>HTPG_CHRVO</name>
<comment type="function">
    <text evidence="1">Molecular chaperone. Has ATPase activity.</text>
</comment>
<comment type="subunit">
    <text evidence="1">Homodimer.</text>
</comment>
<comment type="subcellular location">
    <subcellularLocation>
        <location evidence="1">Cytoplasm</location>
    </subcellularLocation>
</comment>
<comment type="similarity">
    <text evidence="1">Belongs to the heat shock protein 90 family.</text>
</comment>
<comment type="sequence caution" evidence="2">
    <conflict type="erroneous initiation">
        <sequence resource="EMBL-CDS" id="AAQ58993"/>
    </conflict>
</comment>
<protein>
    <recommendedName>
        <fullName evidence="1">Chaperone protein HtpG</fullName>
    </recommendedName>
    <alternativeName>
        <fullName evidence="1">Heat shock protein HtpG</fullName>
    </alternativeName>
    <alternativeName>
        <fullName evidence="1">High temperature protein G</fullName>
    </alternativeName>
</protein>
<accession>Q7NYF6</accession>